<reference key="1">
    <citation type="journal article" date="2008" name="PLoS ONE">
        <title>Environmental adaptation: genomic analysis of the piezotolerant and psychrotolerant deep-sea iron reducing bacterium Shewanella piezotolerans WP3.</title>
        <authorList>
            <person name="Wang F."/>
            <person name="Wang J."/>
            <person name="Jian H."/>
            <person name="Zhang B."/>
            <person name="Li S."/>
            <person name="Wang F."/>
            <person name="Zeng X."/>
            <person name="Gao L."/>
            <person name="Bartlett D.H."/>
            <person name="Yu J."/>
            <person name="Hu S."/>
            <person name="Xiao X."/>
        </authorList>
    </citation>
    <scope>NUCLEOTIDE SEQUENCE [LARGE SCALE GENOMIC DNA]</scope>
    <source>
        <strain>WP3 / JCM 13877</strain>
    </source>
</reference>
<keyword id="KW-0687">Ribonucleoprotein</keyword>
<keyword id="KW-0689">Ribosomal protein</keyword>
<protein>
    <recommendedName>
        <fullName evidence="1">Large ribosomal subunit protein bL19</fullName>
    </recommendedName>
    <alternativeName>
        <fullName evidence="2">50S ribosomal protein L19</fullName>
    </alternativeName>
</protein>
<name>RL19_SHEPW</name>
<accession>B8CQI1</accession>
<organism>
    <name type="scientific">Shewanella piezotolerans (strain WP3 / JCM 13877)</name>
    <dbReference type="NCBI Taxonomy" id="225849"/>
    <lineage>
        <taxon>Bacteria</taxon>
        <taxon>Pseudomonadati</taxon>
        <taxon>Pseudomonadota</taxon>
        <taxon>Gammaproteobacteria</taxon>
        <taxon>Alteromonadales</taxon>
        <taxon>Shewanellaceae</taxon>
        <taxon>Shewanella</taxon>
    </lineage>
</organism>
<comment type="function">
    <text evidence="1">This protein is located at the 30S-50S ribosomal subunit interface and may play a role in the structure and function of the aminoacyl-tRNA binding site.</text>
</comment>
<comment type="similarity">
    <text evidence="1">Belongs to the bacterial ribosomal protein bL19 family.</text>
</comment>
<sequence length="117" mass="13282">MNNIIKMLNEEQMKTDVPEFGAGDTVVVKVRVVEGGKERLQAFEGVVIAKRNRGVHSAFTVRKISNGEGVERAFQTHSPIISSIEVKRRGRVRRAKLYYLRERSGKSARIREKLSTK</sequence>
<evidence type="ECO:0000255" key="1">
    <source>
        <dbReference type="HAMAP-Rule" id="MF_00402"/>
    </source>
</evidence>
<evidence type="ECO:0000305" key="2"/>
<gene>
    <name evidence="1" type="primary">rplS</name>
    <name type="ordered locus">swp_3765</name>
</gene>
<dbReference type="EMBL" id="CP000472">
    <property type="protein sequence ID" value="ACJ30447.1"/>
    <property type="molecule type" value="Genomic_DNA"/>
</dbReference>
<dbReference type="RefSeq" id="WP_020913791.1">
    <property type="nucleotide sequence ID" value="NC_011566.1"/>
</dbReference>
<dbReference type="SMR" id="B8CQI1"/>
<dbReference type="STRING" id="225849.swp_3765"/>
<dbReference type="KEGG" id="swp:swp_3765"/>
<dbReference type="eggNOG" id="COG0335">
    <property type="taxonomic scope" value="Bacteria"/>
</dbReference>
<dbReference type="HOGENOM" id="CLU_103507_2_2_6"/>
<dbReference type="OrthoDB" id="9803541at2"/>
<dbReference type="Proteomes" id="UP000000753">
    <property type="component" value="Chromosome"/>
</dbReference>
<dbReference type="GO" id="GO:0022625">
    <property type="term" value="C:cytosolic large ribosomal subunit"/>
    <property type="evidence" value="ECO:0007669"/>
    <property type="project" value="TreeGrafter"/>
</dbReference>
<dbReference type="GO" id="GO:0003735">
    <property type="term" value="F:structural constituent of ribosome"/>
    <property type="evidence" value="ECO:0007669"/>
    <property type="project" value="InterPro"/>
</dbReference>
<dbReference type="GO" id="GO:0006412">
    <property type="term" value="P:translation"/>
    <property type="evidence" value="ECO:0007669"/>
    <property type="project" value="UniProtKB-UniRule"/>
</dbReference>
<dbReference type="FunFam" id="2.30.30.790:FF:000001">
    <property type="entry name" value="50S ribosomal protein L19"/>
    <property type="match status" value="1"/>
</dbReference>
<dbReference type="Gene3D" id="2.30.30.790">
    <property type="match status" value="1"/>
</dbReference>
<dbReference type="HAMAP" id="MF_00402">
    <property type="entry name" value="Ribosomal_bL19"/>
    <property type="match status" value="1"/>
</dbReference>
<dbReference type="InterPro" id="IPR001857">
    <property type="entry name" value="Ribosomal_bL19"/>
</dbReference>
<dbReference type="InterPro" id="IPR018257">
    <property type="entry name" value="Ribosomal_bL19_CS"/>
</dbReference>
<dbReference type="InterPro" id="IPR038657">
    <property type="entry name" value="Ribosomal_bL19_sf"/>
</dbReference>
<dbReference type="InterPro" id="IPR008991">
    <property type="entry name" value="Translation_prot_SH3-like_sf"/>
</dbReference>
<dbReference type="NCBIfam" id="TIGR01024">
    <property type="entry name" value="rplS_bact"/>
    <property type="match status" value="1"/>
</dbReference>
<dbReference type="PANTHER" id="PTHR15680:SF9">
    <property type="entry name" value="LARGE RIBOSOMAL SUBUNIT PROTEIN BL19M"/>
    <property type="match status" value="1"/>
</dbReference>
<dbReference type="PANTHER" id="PTHR15680">
    <property type="entry name" value="RIBOSOMAL PROTEIN L19"/>
    <property type="match status" value="1"/>
</dbReference>
<dbReference type="Pfam" id="PF01245">
    <property type="entry name" value="Ribosomal_L19"/>
    <property type="match status" value="1"/>
</dbReference>
<dbReference type="PIRSF" id="PIRSF002191">
    <property type="entry name" value="Ribosomal_L19"/>
    <property type="match status" value="1"/>
</dbReference>
<dbReference type="PRINTS" id="PR00061">
    <property type="entry name" value="RIBOSOMALL19"/>
</dbReference>
<dbReference type="SUPFAM" id="SSF50104">
    <property type="entry name" value="Translation proteins SH3-like domain"/>
    <property type="match status" value="1"/>
</dbReference>
<dbReference type="PROSITE" id="PS01015">
    <property type="entry name" value="RIBOSOMAL_L19"/>
    <property type="match status" value="1"/>
</dbReference>
<proteinExistence type="inferred from homology"/>
<feature type="chain" id="PRO_1000193885" description="Large ribosomal subunit protein bL19">
    <location>
        <begin position="1"/>
        <end position="117"/>
    </location>
</feature>